<accession>Q8ZH96</accession>
<accession>Q0WI34</accession>
<sequence>MTIALSEQLTNRFFRYLAVSSQSDAASPTLPSTEGQHKMAQMLAEELRQLGLEDILIDEHATVTARKPGNQPTAPRIGFITHIDTVDVGLSPDIHPQRLRFTGSDLCLNAEQGIYLRTAEHPEILRYQGEEIIFSDGTSVLGADNKAAVTVVMTLLENLTADDCHGDIVVAFVPDEEIGLRGAKALDLARFDVDFAYTIDCCELGEVVYENFNAASAEIDIIGVTAHPMSAKNVLINPIRVAYDIISEFSPQETPEHTEGREGYVWFTDMTANPNSAKLKIAIRDFDNVSFAARKAYIGEVVAKVSAQYPRAKISYSVTDVYSNISNSIGEDKRAIDLIFSSMAELNIEPKVIPMRGGTDGAALSTQGLLTPNYFTGAHNFHSPFEFLPISSFVKSYQLTRTICLSAAKA</sequence>
<name>Y1009_YERPE</name>
<evidence type="ECO:0000250" key="1"/>
<evidence type="ECO:0000305" key="2"/>
<protein>
    <recommendedName>
        <fullName>Peptidase T-like protein YPO1009/y3403/YP_3421</fullName>
        <ecNumber>3.4.11.-</ecNumber>
    </recommendedName>
</protein>
<feature type="chain" id="PRO_0000185337" description="Peptidase T-like protein YPO1009/y3403/YP_3421">
    <location>
        <begin position="1"/>
        <end position="410"/>
    </location>
</feature>
<feature type="active site" evidence="1">
    <location>
        <position position="84"/>
    </location>
</feature>
<feature type="active site" description="Proton acceptor" evidence="1">
    <location>
        <position position="176"/>
    </location>
</feature>
<feature type="binding site" evidence="1">
    <location>
        <position position="82"/>
    </location>
    <ligand>
        <name>Zn(2+)</name>
        <dbReference type="ChEBI" id="CHEBI:29105"/>
        <label>1</label>
    </ligand>
</feature>
<feature type="binding site" evidence="1">
    <location>
        <position position="144"/>
    </location>
    <ligand>
        <name>Zn(2+)</name>
        <dbReference type="ChEBI" id="CHEBI:29105"/>
        <label>1</label>
    </ligand>
</feature>
<feature type="binding site" evidence="1">
    <location>
        <position position="144"/>
    </location>
    <ligand>
        <name>Zn(2+)</name>
        <dbReference type="ChEBI" id="CHEBI:29105"/>
        <label>2</label>
    </ligand>
</feature>
<feature type="binding site" evidence="1">
    <location>
        <position position="177"/>
    </location>
    <ligand>
        <name>Zn(2+)</name>
        <dbReference type="ChEBI" id="CHEBI:29105"/>
        <label>2</label>
    </ligand>
</feature>
<feature type="binding site" evidence="1">
    <location>
        <position position="200"/>
    </location>
    <ligand>
        <name>Zn(2+)</name>
        <dbReference type="ChEBI" id="CHEBI:29105"/>
        <label>1</label>
    </ligand>
</feature>
<feature type="binding site" evidence="1">
    <location>
        <position position="382"/>
    </location>
    <ligand>
        <name>Zn(2+)</name>
        <dbReference type="ChEBI" id="CHEBI:29105"/>
        <label>2</label>
    </ligand>
</feature>
<reference key="1">
    <citation type="journal article" date="2001" name="Nature">
        <title>Genome sequence of Yersinia pestis, the causative agent of plague.</title>
        <authorList>
            <person name="Parkhill J."/>
            <person name="Wren B.W."/>
            <person name="Thomson N.R."/>
            <person name="Titball R.W."/>
            <person name="Holden M.T.G."/>
            <person name="Prentice M.B."/>
            <person name="Sebaihia M."/>
            <person name="James K.D."/>
            <person name="Churcher C.M."/>
            <person name="Mungall K.L."/>
            <person name="Baker S."/>
            <person name="Basham D."/>
            <person name="Bentley S.D."/>
            <person name="Brooks K."/>
            <person name="Cerdeno-Tarraga A.-M."/>
            <person name="Chillingworth T."/>
            <person name="Cronin A."/>
            <person name="Davies R.M."/>
            <person name="Davis P."/>
            <person name="Dougan G."/>
            <person name="Feltwell T."/>
            <person name="Hamlin N."/>
            <person name="Holroyd S."/>
            <person name="Jagels K."/>
            <person name="Karlyshev A.V."/>
            <person name="Leather S."/>
            <person name="Moule S."/>
            <person name="Oyston P.C.F."/>
            <person name="Quail M.A."/>
            <person name="Rutherford K.M."/>
            <person name="Simmonds M."/>
            <person name="Skelton J."/>
            <person name="Stevens K."/>
            <person name="Whitehead S."/>
            <person name="Barrell B.G."/>
        </authorList>
    </citation>
    <scope>NUCLEOTIDE SEQUENCE [LARGE SCALE GENOMIC DNA]</scope>
    <source>
        <strain>CO-92 / Biovar Orientalis</strain>
    </source>
</reference>
<reference key="2">
    <citation type="journal article" date="2002" name="J. Bacteriol.">
        <title>Genome sequence of Yersinia pestis KIM.</title>
        <authorList>
            <person name="Deng W."/>
            <person name="Burland V."/>
            <person name="Plunkett G. III"/>
            <person name="Boutin A."/>
            <person name="Mayhew G.F."/>
            <person name="Liss P."/>
            <person name="Perna N.T."/>
            <person name="Rose D.J."/>
            <person name="Mau B."/>
            <person name="Zhou S."/>
            <person name="Schwartz D.C."/>
            <person name="Fetherston J.D."/>
            <person name="Lindler L.E."/>
            <person name="Brubaker R.R."/>
            <person name="Plano G.V."/>
            <person name="Straley S.C."/>
            <person name="McDonough K.A."/>
            <person name="Nilles M.L."/>
            <person name="Matson J.S."/>
            <person name="Blattner F.R."/>
            <person name="Perry R.D."/>
        </authorList>
    </citation>
    <scope>NUCLEOTIDE SEQUENCE [LARGE SCALE GENOMIC DNA]</scope>
    <source>
        <strain>KIM10+ / Biovar Mediaevalis</strain>
    </source>
</reference>
<reference key="3">
    <citation type="journal article" date="2004" name="DNA Res.">
        <title>Complete genome sequence of Yersinia pestis strain 91001, an isolate avirulent to humans.</title>
        <authorList>
            <person name="Song Y."/>
            <person name="Tong Z."/>
            <person name="Wang J."/>
            <person name="Wang L."/>
            <person name="Guo Z."/>
            <person name="Han Y."/>
            <person name="Zhang J."/>
            <person name="Pei D."/>
            <person name="Zhou D."/>
            <person name="Qin H."/>
            <person name="Pang X."/>
            <person name="Han Y."/>
            <person name="Zhai J."/>
            <person name="Li M."/>
            <person name="Cui B."/>
            <person name="Qi Z."/>
            <person name="Jin L."/>
            <person name="Dai R."/>
            <person name="Chen F."/>
            <person name="Li S."/>
            <person name="Ye C."/>
            <person name="Du Z."/>
            <person name="Lin W."/>
            <person name="Wang J."/>
            <person name="Yu J."/>
            <person name="Yang H."/>
            <person name="Wang J."/>
            <person name="Huang P."/>
            <person name="Yang R."/>
        </authorList>
    </citation>
    <scope>NUCLEOTIDE SEQUENCE [LARGE SCALE GENOMIC DNA]</scope>
    <source>
        <strain>91001 / Biovar Mediaevalis</strain>
    </source>
</reference>
<gene>
    <name type="ordered locus">YPO1009</name>
    <name type="ordered locus">y3403</name>
    <name type="ordered locus">YP_3421</name>
</gene>
<comment type="cofactor">
    <cofactor evidence="1">
        <name>Zn(2+)</name>
        <dbReference type="ChEBI" id="CHEBI:29105"/>
    </cofactor>
    <text evidence="1">Binds 2 Zn(2+) ions per subunit.</text>
</comment>
<comment type="similarity">
    <text evidence="2">Belongs to the peptidase M20B family.</text>
</comment>
<keyword id="KW-0378">Hydrolase</keyword>
<keyword id="KW-0479">Metal-binding</keyword>
<keyword id="KW-0482">Metalloprotease</keyword>
<keyword id="KW-0645">Protease</keyword>
<keyword id="KW-1185">Reference proteome</keyword>
<keyword id="KW-0862">Zinc</keyword>
<proteinExistence type="inferred from homology"/>
<organism>
    <name type="scientific">Yersinia pestis</name>
    <dbReference type="NCBI Taxonomy" id="632"/>
    <lineage>
        <taxon>Bacteria</taxon>
        <taxon>Pseudomonadati</taxon>
        <taxon>Pseudomonadota</taxon>
        <taxon>Gammaproteobacteria</taxon>
        <taxon>Enterobacterales</taxon>
        <taxon>Yersiniaceae</taxon>
        <taxon>Yersinia</taxon>
    </lineage>
</organism>
<dbReference type="EC" id="3.4.11.-"/>
<dbReference type="EMBL" id="AL590842">
    <property type="protein sequence ID" value="CAL19675.1"/>
    <property type="molecule type" value="Genomic_DNA"/>
</dbReference>
<dbReference type="EMBL" id="AE009952">
    <property type="protein sequence ID" value="AAM86953.1"/>
    <property type="molecule type" value="Genomic_DNA"/>
</dbReference>
<dbReference type="EMBL" id="AE017042">
    <property type="protein sequence ID" value="AAS63582.1"/>
    <property type="molecule type" value="Genomic_DNA"/>
</dbReference>
<dbReference type="PIR" id="AI0123">
    <property type="entry name" value="AI0123"/>
</dbReference>
<dbReference type="RefSeq" id="YP_002346054.1">
    <property type="nucleotide sequence ID" value="NC_003143.1"/>
</dbReference>
<dbReference type="SMR" id="Q8ZH96"/>
<dbReference type="IntAct" id="Q8ZH96">
    <property type="interactions" value="2"/>
</dbReference>
<dbReference type="STRING" id="214092.YPO1009"/>
<dbReference type="PaxDb" id="214092-YPO1009"/>
<dbReference type="DNASU" id="1148350"/>
<dbReference type="EnsemblBacteria" id="AAS63582">
    <property type="protein sequence ID" value="AAS63582"/>
    <property type="gene ID" value="YP_3421"/>
</dbReference>
<dbReference type="KEGG" id="ype:YPO1009"/>
<dbReference type="KEGG" id="ypk:y3403"/>
<dbReference type="KEGG" id="ypm:YP_3421"/>
<dbReference type="PATRIC" id="fig|214092.21.peg.1297"/>
<dbReference type="eggNOG" id="COG2195">
    <property type="taxonomic scope" value="Bacteria"/>
</dbReference>
<dbReference type="HOGENOM" id="CLU_053676_0_0_6"/>
<dbReference type="OMA" id="EGYIWFN"/>
<dbReference type="OrthoDB" id="9804934at2"/>
<dbReference type="Proteomes" id="UP000000815">
    <property type="component" value="Chromosome"/>
</dbReference>
<dbReference type="Proteomes" id="UP000001019">
    <property type="component" value="Chromosome"/>
</dbReference>
<dbReference type="Proteomes" id="UP000002490">
    <property type="component" value="Chromosome"/>
</dbReference>
<dbReference type="GO" id="GO:0008237">
    <property type="term" value="F:metallopeptidase activity"/>
    <property type="evidence" value="ECO:0007669"/>
    <property type="project" value="UniProtKB-KW"/>
</dbReference>
<dbReference type="GO" id="GO:0045148">
    <property type="term" value="F:tripeptide aminopeptidase activity"/>
    <property type="evidence" value="ECO:0007669"/>
    <property type="project" value="InterPro"/>
</dbReference>
<dbReference type="GO" id="GO:0008270">
    <property type="term" value="F:zinc ion binding"/>
    <property type="evidence" value="ECO:0007669"/>
    <property type="project" value="InterPro"/>
</dbReference>
<dbReference type="GO" id="GO:0006518">
    <property type="term" value="P:peptide metabolic process"/>
    <property type="evidence" value="ECO:0007669"/>
    <property type="project" value="InterPro"/>
</dbReference>
<dbReference type="GO" id="GO:0006508">
    <property type="term" value="P:proteolysis"/>
    <property type="evidence" value="ECO:0007669"/>
    <property type="project" value="UniProtKB-KW"/>
</dbReference>
<dbReference type="CDD" id="cd03892">
    <property type="entry name" value="M20_peptT"/>
    <property type="match status" value="1"/>
</dbReference>
<dbReference type="Gene3D" id="3.30.70.360">
    <property type="match status" value="1"/>
</dbReference>
<dbReference type="Gene3D" id="3.40.630.10">
    <property type="entry name" value="Zn peptidases"/>
    <property type="match status" value="1"/>
</dbReference>
<dbReference type="InterPro" id="IPR001261">
    <property type="entry name" value="ArgE/DapE_CS"/>
</dbReference>
<dbReference type="InterPro" id="IPR036264">
    <property type="entry name" value="Bact_exopeptidase_dim_dom"/>
</dbReference>
<dbReference type="InterPro" id="IPR002933">
    <property type="entry name" value="Peptidase_M20"/>
</dbReference>
<dbReference type="InterPro" id="IPR011650">
    <property type="entry name" value="Peptidase_M20_dimer"/>
</dbReference>
<dbReference type="InterPro" id="IPR010161">
    <property type="entry name" value="Peptidase_M20B"/>
</dbReference>
<dbReference type="NCBIfam" id="TIGR01882">
    <property type="entry name" value="peptidase-T"/>
    <property type="match status" value="1"/>
</dbReference>
<dbReference type="NCBIfam" id="NF003976">
    <property type="entry name" value="PRK05469.1"/>
    <property type="match status" value="1"/>
</dbReference>
<dbReference type="NCBIfam" id="NF009920">
    <property type="entry name" value="PRK13381.1"/>
    <property type="match status" value="1"/>
</dbReference>
<dbReference type="PANTHER" id="PTHR42994">
    <property type="entry name" value="PEPTIDASE T"/>
    <property type="match status" value="1"/>
</dbReference>
<dbReference type="PANTHER" id="PTHR42994:SF1">
    <property type="entry name" value="PEPTIDASE T"/>
    <property type="match status" value="1"/>
</dbReference>
<dbReference type="Pfam" id="PF07687">
    <property type="entry name" value="M20_dimer"/>
    <property type="match status" value="1"/>
</dbReference>
<dbReference type="Pfam" id="PF01546">
    <property type="entry name" value="Peptidase_M20"/>
    <property type="match status" value="1"/>
</dbReference>
<dbReference type="PIRSF" id="PIRSF037215">
    <property type="entry name" value="Peptidase_M20B"/>
    <property type="match status" value="1"/>
</dbReference>
<dbReference type="SUPFAM" id="SSF55031">
    <property type="entry name" value="Bacterial exopeptidase dimerisation domain"/>
    <property type="match status" value="1"/>
</dbReference>
<dbReference type="SUPFAM" id="SSF53187">
    <property type="entry name" value="Zn-dependent exopeptidases"/>
    <property type="match status" value="1"/>
</dbReference>
<dbReference type="PROSITE" id="PS00759">
    <property type="entry name" value="ARGE_DAPE_CPG2_2"/>
    <property type="match status" value="1"/>
</dbReference>